<protein>
    <recommendedName>
        <fullName evidence="1">Bifunctional protein FolD</fullName>
    </recommendedName>
    <domain>
        <recommendedName>
            <fullName evidence="1">Methylenetetrahydrofolate dehydrogenase</fullName>
            <ecNumber evidence="1">1.5.1.5</ecNumber>
        </recommendedName>
    </domain>
    <domain>
        <recommendedName>
            <fullName evidence="1">Methenyltetrahydrofolate cyclohydrolase</fullName>
            <ecNumber evidence="1">3.5.4.9</ecNumber>
        </recommendedName>
    </domain>
</protein>
<reference key="1">
    <citation type="journal article" date="2004" name="J. Bacteriol.">
        <title>An evolutionary hot spot: the pNGR234b replicon of Rhizobium sp. strain NGR234.</title>
        <authorList>
            <person name="Streit W.R."/>
            <person name="Schmitz R.A."/>
            <person name="Perret X."/>
            <person name="Staehelin C."/>
            <person name="Deakin W.J."/>
            <person name="Raasch C."/>
            <person name="Liesegang H."/>
            <person name="Broughton W.J."/>
        </authorList>
    </citation>
    <scope>NUCLEOTIDE SEQUENCE [LARGE SCALE GENOMIC DNA]</scope>
    <source>
        <strain>NBRC 101917 / NGR234</strain>
    </source>
</reference>
<reference key="2">
    <citation type="journal article" date="2009" name="Appl. Environ. Microbiol.">
        <title>Rhizobium sp. strain NGR234 possesses a remarkable number of secretion systems.</title>
        <authorList>
            <person name="Schmeisser C."/>
            <person name="Liesegang H."/>
            <person name="Krysciak D."/>
            <person name="Bakkou N."/>
            <person name="Le Quere A."/>
            <person name="Wollherr A."/>
            <person name="Heinemeyer I."/>
            <person name="Morgenstern B."/>
            <person name="Pommerening-Roeser A."/>
            <person name="Flores M."/>
            <person name="Palacios R."/>
            <person name="Brenner S."/>
            <person name="Gottschalk G."/>
            <person name="Schmitz R.A."/>
            <person name="Broughton W.J."/>
            <person name="Perret X."/>
            <person name="Strittmatter A.W."/>
            <person name="Streit W.R."/>
        </authorList>
    </citation>
    <scope>NUCLEOTIDE SEQUENCE [LARGE SCALE GENOMIC DNA]</scope>
    <source>
        <strain>NBRC 101917 / NGR234</strain>
    </source>
</reference>
<keyword id="KW-0028">Amino-acid biosynthesis</keyword>
<keyword id="KW-0368">Histidine biosynthesis</keyword>
<keyword id="KW-0378">Hydrolase</keyword>
<keyword id="KW-0486">Methionine biosynthesis</keyword>
<keyword id="KW-0511">Multifunctional enzyme</keyword>
<keyword id="KW-0521">NADP</keyword>
<keyword id="KW-0554">One-carbon metabolism</keyword>
<keyword id="KW-0560">Oxidoreductase</keyword>
<keyword id="KW-0614">Plasmid</keyword>
<keyword id="KW-0658">Purine biosynthesis</keyword>
<keyword id="KW-1185">Reference proteome</keyword>
<organism>
    <name type="scientific">Sinorhizobium fredii (strain NBRC 101917 / NGR234)</name>
    <dbReference type="NCBI Taxonomy" id="394"/>
    <lineage>
        <taxon>Bacteria</taxon>
        <taxon>Pseudomonadati</taxon>
        <taxon>Pseudomonadota</taxon>
        <taxon>Alphaproteobacteria</taxon>
        <taxon>Hyphomicrobiales</taxon>
        <taxon>Rhizobiaceae</taxon>
        <taxon>Sinorhizobium/Ensifer group</taxon>
        <taxon>Sinorhizobium</taxon>
    </lineage>
</organism>
<proteinExistence type="inferred from homology"/>
<feature type="chain" id="PRO_0000268467" description="Bifunctional protein FolD">
    <location>
        <begin position="1"/>
        <end position="307"/>
    </location>
</feature>
<feature type="binding site" evidence="1">
    <location>
        <begin position="170"/>
        <end position="172"/>
    </location>
    <ligand>
        <name>NADP(+)</name>
        <dbReference type="ChEBI" id="CHEBI:58349"/>
    </ligand>
</feature>
<feature type="binding site" evidence="1">
    <location>
        <position position="195"/>
    </location>
    <ligand>
        <name>NADP(+)</name>
        <dbReference type="ChEBI" id="CHEBI:58349"/>
    </ligand>
</feature>
<feature type="binding site" evidence="1">
    <location>
        <position position="236"/>
    </location>
    <ligand>
        <name>NADP(+)</name>
        <dbReference type="ChEBI" id="CHEBI:58349"/>
    </ligand>
</feature>
<accession>Q6W210</accession>
<accession>C3KL27</accession>
<name>FOLD_SINFN</name>
<geneLocation type="plasmid">
    <name>sym pNGR234b</name>
</geneLocation>
<gene>
    <name evidence="1" type="primary">folD</name>
    <name type="ordered locus">NGR_b16620</name>
    <name type="ORF">RNGR00186</name>
</gene>
<evidence type="ECO:0000255" key="1">
    <source>
        <dbReference type="HAMAP-Rule" id="MF_01576"/>
    </source>
</evidence>
<evidence type="ECO:0000305" key="2"/>
<dbReference type="EC" id="1.5.1.5" evidence="1"/>
<dbReference type="EC" id="3.5.4.9" evidence="1"/>
<dbReference type="EMBL" id="AY316746">
    <property type="protein sequence ID" value="AAQ87208.1"/>
    <property type="molecule type" value="Genomic_DNA"/>
</dbReference>
<dbReference type="EMBL" id="CP000874">
    <property type="protein sequence ID" value="ACP23113.1"/>
    <property type="status" value="ALT_INIT"/>
    <property type="molecule type" value="Genomic_DNA"/>
</dbReference>
<dbReference type="RefSeq" id="WP_032490850.1">
    <property type="nucleotide sequence ID" value="NC_012586.1"/>
</dbReference>
<dbReference type="RefSeq" id="YP_002823866.1">
    <property type="nucleotide sequence ID" value="NC_012586.1"/>
</dbReference>
<dbReference type="SMR" id="Q6W210"/>
<dbReference type="KEGG" id="rhi:NGR_b16620"/>
<dbReference type="PATRIC" id="fig|394.7.peg.2080"/>
<dbReference type="HOGENOM" id="CLU_034045_1_2_5"/>
<dbReference type="OrthoDB" id="9803580at2"/>
<dbReference type="UniPathway" id="UPA00193"/>
<dbReference type="Proteomes" id="UP000001054">
    <property type="component" value="Plasmid pNGR234b"/>
</dbReference>
<dbReference type="GO" id="GO:0005829">
    <property type="term" value="C:cytosol"/>
    <property type="evidence" value="ECO:0007669"/>
    <property type="project" value="TreeGrafter"/>
</dbReference>
<dbReference type="GO" id="GO:0004477">
    <property type="term" value="F:methenyltetrahydrofolate cyclohydrolase activity"/>
    <property type="evidence" value="ECO:0007669"/>
    <property type="project" value="UniProtKB-UniRule"/>
</dbReference>
<dbReference type="GO" id="GO:0004488">
    <property type="term" value="F:methylenetetrahydrofolate dehydrogenase (NADP+) activity"/>
    <property type="evidence" value="ECO:0007669"/>
    <property type="project" value="UniProtKB-UniRule"/>
</dbReference>
<dbReference type="GO" id="GO:0000105">
    <property type="term" value="P:L-histidine biosynthetic process"/>
    <property type="evidence" value="ECO:0007669"/>
    <property type="project" value="UniProtKB-KW"/>
</dbReference>
<dbReference type="GO" id="GO:0009086">
    <property type="term" value="P:methionine biosynthetic process"/>
    <property type="evidence" value="ECO:0007669"/>
    <property type="project" value="UniProtKB-KW"/>
</dbReference>
<dbReference type="GO" id="GO:0006164">
    <property type="term" value="P:purine nucleotide biosynthetic process"/>
    <property type="evidence" value="ECO:0007669"/>
    <property type="project" value="UniProtKB-KW"/>
</dbReference>
<dbReference type="GO" id="GO:0035999">
    <property type="term" value="P:tetrahydrofolate interconversion"/>
    <property type="evidence" value="ECO:0007669"/>
    <property type="project" value="UniProtKB-UniRule"/>
</dbReference>
<dbReference type="CDD" id="cd01080">
    <property type="entry name" value="NAD_bind_m-THF_DH_Cyclohyd"/>
    <property type="match status" value="1"/>
</dbReference>
<dbReference type="FunFam" id="3.40.50.720:FF:000006">
    <property type="entry name" value="Bifunctional protein FolD"/>
    <property type="match status" value="1"/>
</dbReference>
<dbReference type="FunFam" id="3.40.50.10860:FF:000005">
    <property type="entry name" value="C-1-tetrahydrofolate synthase, cytoplasmic, putative"/>
    <property type="match status" value="1"/>
</dbReference>
<dbReference type="Gene3D" id="3.40.50.10860">
    <property type="entry name" value="Leucine Dehydrogenase, chain A, domain 1"/>
    <property type="match status" value="1"/>
</dbReference>
<dbReference type="Gene3D" id="3.40.50.720">
    <property type="entry name" value="NAD(P)-binding Rossmann-like Domain"/>
    <property type="match status" value="1"/>
</dbReference>
<dbReference type="HAMAP" id="MF_01576">
    <property type="entry name" value="THF_DHG_CYH"/>
    <property type="match status" value="1"/>
</dbReference>
<dbReference type="InterPro" id="IPR046346">
    <property type="entry name" value="Aminoacid_DH-like_N_sf"/>
</dbReference>
<dbReference type="InterPro" id="IPR036291">
    <property type="entry name" value="NAD(P)-bd_dom_sf"/>
</dbReference>
<dbReference type="InterPro" id="IPR000672">
    <property type="entry name" value="THF_DH/CycHdrlase"/>
</dbReference>
<dbReference type="InterPro" id="IPR020630">
    <property type="entry name" value="THF_DH/CycHdrlase_cat_dom"/>
</dbReference>
<dbReference type="InterPro" id="IPR020867">
    <property type="entry name" value="THF_DH/CycHdrlase_CS"/>
</dbReference>
<dbReference type="InterPro" id="IPR020631">
    <property type="entry name" value="THF_DH/CycHdrlase_NAD-bd_dom"/>
</dbReference>
<dbReference type="NCBIfam" id="NF010785">
    <property type="entry name" value="PRK14188.1"/>
    <property type="match status" value="1"/>
</dbReference>
<dbReference type="PANTHER" id="PTHR48099:SF5">
    <property type="entry name" value="C-1-TETRAHYDROFOLATE SYNTHASE, CYTOPLASMIC"/>
    <property type="match status" value="1"/>
</dbReference>
<dbReference type="PANTHER" id="PTHR48099">
    <property type="entry name" value="C-1-TETRAHYDROFOLATE SYNTHASE, CYTOPLASMIC-RELATED"/>
    <property type="match status" value="1"/>
</dbReference>
<dbReference type="Pfam" id="PF00763">
    <property type="entry name" value="THF_DHG_CYH"/>
    <property type="match status" value="1"/>
</dbReference>
<dbReference type="Pfam" id="PF02882">
    <property type="entry name" value="THF_DHG_CYH_C"/>
    <property type="match status" value="1"/>
</dbReference>
<dbReference type="PRINTS" id="PR00085">
    <property type="entry name" value="THFDHDRGNASE"/>
</dbReference>
<dbReference type="SUPFAM" id="SSF53223">
    <property type="entry name" value="Aminoacid dehydrogenase-like, N-terminal domain"/>
    <property type="match status" value="1"/>
</dbReference>
<dbReference type="SUPFAM" id="SSF51735">
    <property type="entry name" value="NAD(P)-binding Rossmann-fold domains"/>
    <property type="match status" value="1"/>
</dbReference>
<dbReference type="PROSITE" id="PS00767">
    <property type="entry name" value="THF_DHG_CYH_2"/>
    <property type="match status" value="1"/>
</dbReference>
<sequence length="307" mass="32056">MSIGCKLISGREVAESIIDQVKAHTVALSANGITPGLAVIIVGSDPASQVYVASKGRKAEECGFLSIKHELPHDVPERRLLELIDSLNADPSIHGILVQLPLPRHVDSGKVIQAISPQKDIDGFHFINVGKLGTGALETAFVPCTPAGCMILVERIHGKDLSGLSAVVVGRSNIVGKPMANLLLAANATVTIAHSRTANLEVLCRQADILIAAVGRPEMIRSDWIKPGATVIDVGINRIASRDDGGKTRLVGDVDFDGAVERAGAVTPVPGGVGPMTIAMLMANTLRAACHANDEPAPHFGSGGVLR</sequence>
<comment type="function">
    <text evidence="1">Catalyzes the oxidation of 5,10-methylenetetrahydrofolate to 5,10-methenyltetrahydrofolate and then the hydrolysis of 5,10-methenyltetrahydrofolate to 10-formyltetrahydrofolate.</text>
</comment>
<comment type="catalytic activity">
    <reaction evidence="1">
        <text>(6R)-5,10-methylene-5,6,7,8-tetrahydrofolate + NADP(+) = (6R)-5,10-methenyltetrahydrofolate + NADPH</text>
        <dbReference type="Rhea" id="RHEA:22812"/>
        <dbReference type="ChEBI" id="CHEBI:15636"/>
        <dbReference type="ChEBI" id="CHEBI:57455"/>
        <dbReference type="ChEBI" id="CHEBI:57783"/>
        <dbReference type="ChEBI" id="CHEBI:58349"/>
        <dbReference type="EC" id="1.5.1.5"/>
    </reaction>
</comment>
<comment type="catalytic activity">
    <reaction evidence="1">
        <text>(6R)-5,10-methenyltetrahydrofolate + H2O = (6R)-10-formyltetrahydrofolate + H(+)</text>
        <dbReference type="Rhea" id="RHEA:23700"/>
        <dbReference type="ChEBI" id="CHEBI:15377"/>
        <dbReference type="ChEBI" id="CHEBI:15378"/>
        <dbReference type="ChEBI" id="CHEBI:57455"/>
        <dbReference type="ChEBI" id="CHEBI:195366"/>
        <dbReference type="EC" id="3.5.4.9"/>
    </reaction>
</comment>
<comment type="pathway">
    <text evidence="1">One-carbon metabolism; tetrahydrofolate interconversion.</text>
</comment>
<comment type="subunit">
    <text evidence="1">Homodimer.</text>
</comment>
<comment type="similarity">
    <text evidence="1">Belongs to the tetrahydrofolate dehydrogenase/cyclohydrolase family.</text>
</comment>
<comment type="sequence caution" evidence="2">
    <conflict type="erroneous initiation">
        <sequence resource="EMBL-CDS" id="ACP23113"/>
    </conflict>
</comment>